<keyword id="KW-0997">Cell inner membrane</keyword>
<keyword id="KW-1003">Cell membrane</keyword>
<keyword id="KW-0328">Glycosyltransferase</keyword>
<keyword id="KW-0460">Magnesium</keyword>
<keyword id="KW-0472">Membrane</keyword>
<keyword id="KW-0479">Metal-binding</keyword>
<keyword id="KW-0660">Purine salvage</keyword>
<keyword id="KW-0808">Transferase</keyword>
<dbReference type="EC" id="2.4.2.-" evidence="1"/>
<dbReference type="EC" id="2.4.2.22" evidence="1"/>
<dbReference type="EMBL" id="CP000243">
    <property type="protein sequence ID" value="ABE05781.1"/>
    <property type="molecule type" value="Genomic_DNA"/>
</dbReference>
<dbReference type="RefSeq" id="WP_001291988.1">
    <property type="nucleotide sequence ID" value="NZ_CP064825.1"/>
</dbReference>
<dbReference type="SMR" id="Q1RFT3"/>
<dbReference type="KEGG" id="eci:UTI89_C0278"/>
<dbReference type="HOGENOM" id="CLU_080904_3_0_6"/>
<dbReference type="UniPathway" id="UPA00602">
    <property type="reaction ID" value="UER00658"/>
</dbReference>
<dbReference type="UniPathway" id="UPA00909">
    <property type="reaction ID" value="UER00887"/>
</dbReference>
<dbReference type="Proteomes" id="UP000001952">
    <property type="component" value="Chromosome"/>
</dbReference>
<dbReference type="GO" id="GO:0005829">
    <property type="term" value="C:cytosol"/>
    <property type="evidence" value="ECO:0007669"/>
    <property type="project" value="TreeGrafter"/>
</dbReference>
<dbReference type="GO" id="GO:0005886">
    <property type="term" value="C:plasma membrane"/>
    <property type="evidence" value="ECO:0007669"/>
    <property type="project" value="UniProtKB-SubCell"/>
</dbReference>
<dbReference type="GO" id="GO:0052657">
    <property type="term" value="F:guanine phosphoribosyltransferase activity"/>
    <property type="evidence" value="ECO:0007669"/>
    <property type="project" value="RHEA"/>
</dbReference>
<dbReference type="GO" id="GO:0004422">
    <property type="term" value="F:hypoxanthine phosphoribosyltransferase activity"/>
    <property type="evidence" value="ECO:0007669"/>
    <property type="project" value="TreeGrafter"/>
</dbReference>
<dbReference type="GO" id="GO:0000287">
    <property type="term" value="F:magnesium ion binding"/>
    <property type="evidence" value="ECO:0007669"/>
    <property type="project" value="UniProtKB-UniRule"/>
</dbReference>
<dbReference type="GO" id="GO:0000310">
    <property type="term" value="F:xanthine phosphoribosyltransferase activity"/>
    <property type="evidence" value="ECO:0007669"/>
    <property type="project" value="UniProtKB-UniRule"/>
</dbReference>
<dbReference type="GO" id="GO:0032263">
    <property type="term" value="P:GMP salvage"/>
    <property type="evidence" value="ECO:0007669"/>
    <property type="project" value="UniProtKB-UniRule"/>
</dbReference>
<dbReference type="GO" id="GO:0032264">
    <property type="term" value="P:IMP salvage"/>
    <property type="evidence" value="ECO:0007669"/>
    <property type="project" value="TreeGrafter"/>
</dbReference>
<dbReference type="GO" id="GO:0006166">
    <property type="term" value="P:purine ribonucleoside salvage"/>
    <property type="evidence" value="ECO:0007669"/>
    <property type="project" value="UniProtKB-KW"/>
</dbReference>
<dbReference type="GO" id="GO:0032265">
    <property type="term" value="P:XMP salvage"/>
    <property type="evidence" value="ECO:0007669"/>
    <property type="project" value="UniProtKB-UniRule"/>
</dbReference>
<dbReference type="CDD" id="cd06223">
    <property type="entry name" value="PRTases_typeI"/>
    <property type="match status" value="1"/>
</dbReference>
<dbReference type="FunFam" id="3.40.50.2020:FF:000009">
    <property type="entry name" value="Xanthine phosphoribosyltransferase"/>
    <property type="match status" value="1"/>
</dbReference>
<dbReference type="Gene3D" id="3.40.50.2020">
    <property type="match status" value="1"/>
</dbReference>
<dbReference type="HAMAP" id="MF_01903">
    <property type="entry name" value="XGPRT"/>
    <property type="match status" value="1"/>
</dbReference>
<dbReference type="InterPro" id="IPR000836">
    <property type="entry name" value="PRibTrfase_dom"/>
</dbReference>
<dbReference type="InterPro" id="IPR029057">
    <property type="entry name" value="PRTase-like"/>
</dbReference>
<dbReference type="InterPro" id="IPR023747">
    <property type="entry name" value="Xanthine_Guanine_PRibTrfase"/>
</dbReference>
<dbReference type="NCBIfam" id="NF006613">
    <property type="entry name" value="PRK09177.1"/>
    <property type="match status" value="1"/>
</dbReference>
<dbReference type="PANTHER" id="PTHR39563">
    <property type="entry name" value="XANTHINE PHOSPHORIBOSYLTRANSFERASE"/>
    <property type="match status" value="1"/>
</dbReference>
<dbReference type="PANTHER" id="PTHR39563:SF1">
    <property type="entry name" value="XANTHINE-GUANINE PHOSPHORIBOSYLTRANSFERASE"/>
    <property type="match status" value="1"/>
</dbReference>
<dbReference type="Pfam" id="PF00156">
    <property type="entry name" value="Pribosyltran"/>
    <property type="match status" value="1"/>
</dbReference>
<dbReference type="SUPFAM" id="SSF53271">
    <property type="entry name" value="PRTase-like"/>
    <property type="match status" value="1"/>
</dbReference>
<dbReference type="PROSITE" id="PS00103">
    <property type="entry name" value="PUR_PYR_PR_TRANSFER"/>
    <property type="match status" value="1"/>
</dbReference>
<evidence type="ECO:0000255" key="1">
    <source>
        <dbReference type="HAMAP-Rule" id="MF_01903"/>
    </source>
</evidence>
<name>XGPT_ECOUT</name>
<protein>
    <recommendedName>
        <fullName evidence="1">Xanthine-guanine phosphoribosyltransferase</fullName>
        <shortName evidence="1">XGPRT</shortName>
        <ecNumber evidence="1">2.4.2.-</ecNumber>
        <ecNumber evidence="1">2.4.2.22</ecNumber>
    </recommendedName>
    <alternativeName>
        <fullName evidence="1">Xanthine phosphoribosyltransferase</fullName>
    </alternativeName>
</protein>
<comment type="function">
    <text evidence="1">Purine salvage pathway enzyme that catalyzes the transfer of the ribosyl-5-phosphate group from 5-phospho-alpha-D-ribose 1-diphosphate (PRPP) to the N9 position of the 6-oxopurines guanine and xanthine to form the corresponding ribonucleotides GMP (guanosine 5'-monophosphate) and XMP (xanthosine 5'-monophosphate), with the release of PPi. To a lesser extent, also acts on hypoxanthine.</text>
</comment>
<comment type="catalytic activity">
    <reaction evidence="1">
        <text>GMP + diphosphate = guanine + 5-phospho-alpha-D-ribose 1-diphosphate</text>
        <dbReference type="Rhea" id="RHEA:25424"/>
        <dbReference type="ChEBI" id="CHEBI:16235"/>
        <dbReference type="ChEBI" id="CHEBI:33019"/>
        <dbReference type="ChEBI" id="CHEBI:58017"/>
        <dbReference type="ChEBI" id="CHEBI:58115"/>
    </reaction>
    <physiologicalReaction direction="right-to-left" evidence="1">
        <dbReference type="Rhea" id="RHEA:25426"/>
    </physiologicalReaction>
</comment>
<comment type="catalytic activity">
    <reaction evidence="1">
        <text>XMP + diphosphate = xanthine + 5-phospho-alpha-D-ribose 1-diphosphate</text>
        <dbReference type="Rhea" id="RHEA:10800"/>
        <dbReference type="ChEBI" id="CHEBI:17712"/>
        <dbReference type="ChEBI" id="CHEBI:33019"/>
        <dbReference type="ChEBI" id="CHEBI:57464"/>
        <dbReference type="ChEBI" id="CHEBI:58017"/>
        <dbReference type="EC" id="2.4.2.22"/>
    </reaction>
    <physiologicalReaction direction="right-to-left" evidence="1">
        <dbReference type="Rhea" id="RHEA:10802"/>
    </physiologicalReaction>
</comment>
<comment type="catalytic activity">
    <reaction evidence="1">
        <text>IMP + diphosphate = hypoxanthine + 5-phospho-alpha-D-ribose 1-diphosphate</text>
        <dbReference type="Rhea" id="RHEA:17973"/>
        <dbReference type="ChEBI" id="CHEBI:17368"/>
        <dbReference type="ChEBI" id="CHEBI:33019"/>
        <dbReference type="ChEBI" id="CHEBI:58017"/>
        <dbReference type="ChEBI" id="CHEBI:58053"/>
    </reaction>
    <physiologicalReaction direction="right-to-left" evidence="1">
        <dbReference type="Rhea" id="RHEA:17975"/>
    </physiologicalReaction>
</comment>
<comment type="cofactor">
    <cofactor evidence="1">
        <name>Mg(2+)</name>
        <dbReference type="ChEBI" id="CHEBI:18420"/>
    </cofactor>
</comment>
<comment type="pathway">
    <text evidence="1">Purine metabolism; GMP biosynthesis via salvage pathway; GMP from guanine: step 1/1.</text>
</comment>
<comment type="pathway">
    <text evidence="1">Purine metabolism; XMP biosynthesis via salvage pathway; XMP from xanthine: step 1/1.</text>
</comment>
<comment type="subunit">
    <text evidence="1">Homotetramer.</text>
</comment>
<comment type="subcellular location">
    <subcellularLocation>
        <location evidence="1">Cell inner membrane</location>
        <topology evidence="1">Peripheral membrane protein</topology>
    </subcellularLocation>
</comment>
<comment type="similarity">
    <text evidence="1">Belongs to the purine/pyrimidine phosphoribosyltransferase family. XGPT subfamily.</text>
</comment>
<gene>
    <name evidence="1" type="primary">gpt</name>
    <name type="ordered locus">UTI89_C0278</name>
</gene>
<sequence>MSEKYIVTWDMLQIHARKLASRLMPSEQWKGIIAVSRGGLVPGALLARELGIRHVDTVCISSYDHDNQRELKVLKRAEGDGEGFIVIDDLVDTGGTAVAIREMYPKAHFITIFAKPAGRPLVDDYVVDIPQNTWIEQPWDMGVVFVPPISGR</sequence>
<reference key="1">
    <citation type="journal article" date="2006" name="Proc. Natl. Acad. Sci. U.S.A.">
        <title>Identification of genes subject to positive selection in uropathogenic strains of Escherichia coli: a comparative genomics approach.</title>
        <authorList>
            <person name="Chen S.L."/>
            <person name="Hung C.-S."/>
            <person name="Xu J."/>
            <person name="Reigstad C.S."/>
            <person name="Magrini V."/>
            <person name="Sabo A."/>
            <person name="Blasiar D."/>
            <person name="Bieri T."/>
            <person name="Meyer R.R."/>
            <person name="Ozersky P."/>
            <person name="Armstrong J.R."/>
            <person name="Fulton R.S."/>
            <person name="Latreille J.P."/>
            <person name="Spieth J."/>
            <person name="Hooton T.M."/>
            <person name="Mardis E.R."/>
            <person name="Hultgren S.J."/>
            <person name="Gordon J.I."/>
        </authorList>
    </citation>
    <scope>NUCLEOTIDE SEQUENCE [LARGE SCALE GENOMIC DNA]</scope>
    <source>
        <strain>UTI89 / UPEC</strain>
    </source>
</reference>
<proteinExistence type="inferred from homology"/>
<accession>Q1RFT3</accession>
<organism>
    <name type="scientific">Escherichia coli (strain UTI89 / UPEC)</name>
    <dbReference type="NCBI Taxonomy" id="364106"/>
    <lineage>
        <taxon>Bacteria</taxon>
        <taxon>Pseudomonadati</taxon>
        <taxon>Pseudomonadota</taxon>
        <taxon>Gammaproteobacteria</taxon>
        <taxon>Enterobacterales</taxon>
        <taxon>Enterobacteriaceae</taxon>
        <taxon>Escherichia</taxon>
    </lineage>
</organism>
<feature type="chain" id="PRO_0000261006" description="Xanthine-guanine phosphoribosyltransferase">
    <location>
        <begin position="1"/>
        <end position="152"/>
    </location>
</feature>
<feature type="binding site" evidence="1">
    <location>
        <begin position="37"/>
        <end position="38"/>
    </location>
    <ligand>
        <name>5-phospho-alpha-D-ribose 1-diphosphate</name>
        <dbReference type="ChEBI" id="CHEBI:58017"/>
    </ligand>
</feature>
<feature type="binding site" evidence="1">
    <location>
        <position position="69"/>
    </location>
    <ligand>
        <name>5-phospho-alpha-D-ribose 1-diphosphate</name>
        <dbReference type="ChEBI" id="CHEBI:58017"/>
    </ligand>
</feature>
<feature type="binding site" evidence="1">
    <location>
        <position position="69"/>
    </location>
    <ligand>
        <name>GMP</name>
        <dbReference type="ChEBI" id="CHEBI:58115"/>
    </ligand>
</feature>
<feature type="binding site" evidence="1">
    <location>
        <begin position="88"/>
        <end position="96"/>
    </location>
    <ligand>
        <name>5-phospho-alpha-D-ribose 1-diphosphate</name>
        <dbReference type="ChEBI" id="CHEBI:58017"/>
    </ligand>
</feature>
<feature type="binding site" evidence="1">
    <location>
        <position position="89"/>
    </location>
    <ligand>
        <name>Mg(2+)</name>
        <dbReference type="ChEBI" id="CHEBI:18420"/>
    </ligand>
</feature>
<feature type="binding site" evidence="1">
    <location>
        <begin position="92"/>
        <end position="96"/>
    </location>
    <ligand>
        <name>GMP</name>
        <dbReference type="ChEBI" id="CHEBI:58115"/>
    </ligand>
</feature>
<feature type="binding site" evidence="1">
    <location>
        <position position="92"/>
    </location>
    <ligand>
        <name>guanine</name>
        <dbReference type="ChEBI" id="CHEBI:16235"/>
    </ligand>
</feature>
<feature type="binding site" evidence="1">
    <location>
        <position position="92"/>
    </location>
    <ligand>
        <name>xanthine</name>
        <dbReference type="ChEBI" id="CHEBI:17712"/>
    </ligand>
</feature>
<feature type="binding site" evidence="1">
    <location>
        <begin position="134"/>
        <end position="135"/>
    </location>
    <ligand>
        <name>GMP</name>
        <dbReference type="ChEBI" id="CHEBI:58115"/>
    </ligand>
</feature>
<feature type="binding site" evidence="1">
    <location>
        <position position="135"/>
    </location>
    <ligand>
        <name>guanine</name>
        <dbReference type="ChEBI" id="CHEBI:16235"/>
    </ligand>
</feature>
<feature type="binding site" evidence="1">
    <location>
        <position position="135"/>
    </location>
    <ligand>
        <name>xanthine</name>
        <dbReference type="ChEBI" id="CHEBI:17712"/>
    </ligand>
</feature>